<evidence type="ECO:0000255" key="1">
    <source>
        <dbReference type="HAMAP-Rule" id="MF_00391"/>
    </source>
</evidence>
<evidence type="ECO:0000305" key="2"/>
<accession>A0QND5</accession>
<name>RL34_MYCA1</name>
<reference key="1">
    <citation type="submission" date="2006-10" db="EMBL/GenBank/DDBJ databases">
        <authorList>
            <person name="Fleischmann R.D."/>
            <person name="Dodson R.J."/>
            <person name="Haft D.H."/>
            <person name="Merkel J.S."/>
            <person name="Nelson W.C."/>
            <person name="Fraser C.M."/>
        </authorList>
    </citation>
    <scope>NUCLEOTIDE SEQUENCE [LARGE SCALE GENOMIC DNA]</scope>
    <source>
        <strain>104</strain>
    </source>
</reference>
<dbReference type="EMBL" id="CP000479">
    <property type="protein sequence ID" value="ABK65358.1"/>
    <property type="molecule type" value="Genomic_DNA"/>
</dbReference>
<dbReference type="RefSeq" id="WP_003874369.1">
    <property type="nucleotide sequence ID" value="NC_008595.1"/>
</dbReference>
<dbReference type="SMR" id="A0QND5"/>
<dbReference type="GeneID" id="97442252"/>
<dbReference type="KEGG" id="mav:MAV_5313"/>
<dbReference type="HOGENOM" id="CLU_129938_2_1_11"/>
<dbReference type="Proteomes" id="UP000001574">
    <property type="component" value="Chromosome"/>
</dbReference>
<dbReference type="GO" id="GO:1990904">
    <property type="term" value="C:ribonucleoprotein complex"/>
    <property type="evidence" value="ECO:0007669"/>
    <property type="project" value="UniProtKB-KW"/>
</dbReference>
<dbReference type="GO" id="GO:0005840">
    <property type="term" value="C:ribosome"/>
    <property type="evidence" value="ECO:0007669"/>
    <property type="project" value="UniProtKB-KW"/>
</dbReference>
<dbReference type="GO" id="GO:0003735">
    <property type="term" value="F:structural constituent of ribosome"/>
    <property type="evidence" value="ECO:0007669"/>
    <property type="project" value="InterPro"/>
</dbReference>
<dbReference type="GO" id="GO:0006412">
    <property type="term" value="P:translation"/>
    <property type="evidence" value="ECO:0007669"/>
    <property type="project" value="UniProtKB-UniRule"/>
</dbReference>
<dbReference type="FunFam" id="1.10.287.3980:FF:000001">
    <property type="entry name" value="Mitochondrial ribosomal protein L34"/>
    <property type="match status" value="1"/>
</dbReference>
<dbReference type="Gene3D" id="1.10.287.3980">
    <property type="match status" value="1"/>
</dbReference>
<dbReference type="HAMAP" id="MF_00391">
    <property type="entry name" value="Ribosomal_bL34"/>
    <property type="match status" value="1"/>
</dbReference>
<dbReference type="InterPro" id="IPR000271">
    <property type="entry name" value="Ribosomal_bL34"/>
</dbReference>
<dbReference type="InterPro" id="IPR020939">
    <property type="entry name" value="Ribosomal_bL34_CS"/>
</dbReference>
<dbReference type="NCBIfam" id="TIGR01030">
    <property type="entry name" value="rpmH_bact"/>
    <property type="match status" value="1"/>
</dbReference>
<dbReference type="PANTHER" id="PTHR14503:SF4">
    <property type="entry name" value="LARGE RIBOSOMAL SUBUNIT PROTEIN BL34M"/>
    <property type="match status" value="1"/>
</dbReference>
<dbReference type="PANTHER" id="PTHR14503">
    <property type="entry name" value="MITOCHONDRIAL RIBOSOMAL PROTEIN 34 FAMILY MEMBER"/>
    <property type="match status" value="1"/>
</dbReference>
<dbReference type="Pfam" id="PF00468">
    <property type="entry name" value="Ribosomal_L34"/>
    <property type="match status" value="1"/>
</dbReference>
<dbReference type="PROSITE" id="PS00784">
    <property type="entry name" value="RIBOSOMAL_L34"/>
    <property type="match status" value="1"/>
</dbReference>
<protein>
    <recommendedName>
        <fullName evidence="1">Large ribosomal subunit protein bL34</fullName>
    </recommendedName>
    <alternativeName>
        <fullName evidence="2">50S ribosomal protein L34</fullName>
    </alternativeName>
</protein>
<organism>
    <name type="scientific">Mycobacterium avium (strain 104)</name>
    <dbReference type="NCBI Taxonomy" id="243243"/>
    <lineage>
        <taxon>Bacteria</taxon>
        <taxon>Bacillati</taxon>
        <taxon>Actinomycetota</taxon>
        <taxon>Actinomycetes</taxon>
        <taxon>Mycobacteriales</taxon>
        <taxon>Mycobacteriaceae</taxon>
        <taxon>Mycobacterium</taxon>
        <taxon>Mycobacterium avium complex (MAC)</taxon>
    </lineage>
</organism>
<keyword id="KW-0687">Ribonucleoprotein</keyword>
<keyword id="KW-0689">Ribosomal protein</keyword>
<sequence>MAKGKRTFQPNNRRRARVHGFRLRMRTRAGRAIVSGRRRKGRRALSA</sequence>
<proteinExistence type="inferred from homology"/>
<gene>
    <name evidence="1" type="primary">rpmH</name>
    <name type="ordered locus">MAV_5313</name>
</gene>
<feature type="chain" id="PRO_1000013374" description="Large ribosomal subunit protein bL34">
    <location>
        <begin position="1"/>
        <end position="47"/>
    </location>
</feature>
<comment type="similarity">
    <text evidence="1">Belongs to the bacterial ribosomal protein bL34 family.</text>
</comment>